<evidence type="ECO:0000250" key="1">
    <source>
        <dbReference type="UniProtKB" id="P37805"/>
    </source>
</evidence>
<evidence type="ECO:0000255" key="2">
    <source>
        <dbReference type="PROSITE-ProRule" id="PRU00044"/>
    </source>
</evidence>
<evidence type="ECO:0000256" key="3">
    <source>
        <dbReference type="SAM" id="MobiDB-lite"/>
    </source>
</evidence>
<evidence type="ECO:0000305" key="4"/>
<reference key="1">
    <citation type="submission" date="2005-06" db="EMBL/GenBank/DDBJ databases">
        <title>DNA sequences of macaque genes expressed in brain or testis and its evolutionary implications.</title>
        <authorList>
            <consortium name="International consortium for macaque cDNA sequencing and analysis"/>
        </authorList>
    </citation>
    <scope>NUCLEOTIDE SEQUENCE [LARGE SCALE MRNA]</scope>
    <source>
        <tissue>Frontal cortex</tissue>
    </source>
</reference>
<gene>
    <name type="primary">TAGLN3</name>
    <name type="ORF">QflA-12284</name>
</gene>
<dbReference type="EMBL" id="AB169549">
    <property type="protein sequence ID" value="BAE01631.1"/>
    <property type="molecule type" value="mRNA"/>
</dbReference>
<dbReference type="RefSeq" id="XP_005548241.2">
    <property type="nucleotide sequence ID" value="XM_005548184.4"/>
</dbReference>
<dbReference type="SMR" id="Q4R5J4"/>
<dbReference type="STRING" id="9541.ENSMFAP00000003755"/>
<dbReference type="Ensembl" id="ENSMFAT00000022416.2">
    <property type="protein sequence ID" value="ENSMFAP00000003755.1"/>
    <property type="gene ID" value="ENSMFAG00000001611.2"/>
</dbReference>
<dbReference type="GeneID" id="101866401"/>
<dbReference type="KEGG" id="mcf:101866401"/>
<dbReference type="CTD" id="29114"/>
<dbReference type="VEuPathDB" id="HostDB:ENSMFAG00000001611"/>
<dbReference type="eggNOG" id="KOG2046">
    <property type="taxonomic scope" value="Eukaryota"/>
</dbReference>
<dbReference type="GeneTree" id="ENSGT00940000159385"/>
<dbReference type="OMA" id="KWLMDGI"/>
<dbReference type="OrthoDB" id="1193at314294"/>
<dbReference type="Proteomes" id="UP000233100">
    <property type="component" value="Chromosome 2"/>
</dbReference>
<dbReference type="Bgee" id="ENSMFAG00000001611">
    <property type="expression patterns" value="Expressed in frontal cortex and 4 other cell types or tissues"/>
</dbReference>
<dbReference type="GO" id="GO:0015629">
    <property type="term" value="C:actin cytoskeleton"/>
    <property type="evidence" value="ECO:0007669"/>
    <property type="project" value="TreeGrafter"/>
</dbReference>
<dbReference type="GO" id="GO:0005634">
    <property type="term" value="C:nucleus"/>
    <property type="evidence" value="ECO:0007669"/>
    <property type="project" value="Ensembl"/>
</dbReference>
<dbReference type="GO" id="GO:0045202">
    <property type="term" value="C:synapse"/>
    <property type="evidence" value="ECO:0007669"/>
    <property type="project" value="Ensembl"/>
</dbReference>
<dbReference type="GO" id="GO:0051015">
    <property type="term" value="F:actin filament binding"/>
    <property type="evidence" value="ECO:0007669"/>
    <property type="project" value="TreeGrafter"/>
</dbReference>
<dbReference type="GO" id="GO:0007015">
    <property type="term" value="P:actin filament organization"/>
    <property type="evidence" value="ECO:0007669"/>
    <property type="project" value="TreeGrafter"/>
</dbReference>
<dbReference type="GO" id="GO:0000122">
    <property type="term" value="P:negative regulation of transcription by RNA polymerase II"/>
    <property type="evidence" value="ECO:0007669"/>
    <property type="project" value="Ensembl"/>
</dbReference>
<dbReference type="CDD" id="cd21281">
    <property type="entry name" value="CH_TAGLN3"/>
    <property type="match status" value="1"/>
</dbReference>
<dbReference type="FunFam" id="1.10.418.10:FF:000039">
    <property type="entry name" value="Transgelin"/>
    <property type="match status" value="1"/>
</dbReference>
<dbReference type="Gene3D" id="1.10.418.10">
    <property type="entry name" value="Calponin-like domain"/>
    <property type="match status" value="1"/>
</dbReference>
<dbReference type="InterPro" id="IPR050606">
    <property type="entry name" value="Calponin-like"/>
</dbReference>
<dbReference type="InterPro" id="IPR000557">
    <property type="entry name" value="Calponin_repeat"/>
</dbReference>
<dbReference type="InterPro" id="IPR001715">
    <property type="entry name" value="CH_dom"/>
</dbReference>
<dbReference type="InterPro" id="IPR036872">
    <property type="entry name" value="CH_dom_sf"/>
</dbReference>
<dbReference type="InterPro" id="IPR003096">
    <property type="entry name" value="SM22_calponin"/>
</dbReference>
<dbReference type="PANTHER" id="PTHR47385">
    <property type="entry name" value="CALPONIN"/>
    <property type="match status" value="1"/>
</dbReference>
<dbReference type="PANTHER" id="PTHR47385:SF10">
    <property type="entry name" value="TRANSGELIN-3"/>
    <property type="match status" value="1"/>
</dbReference>
<dbReference type="Pfam" id="PF00402">
    <property type="entry name" value="Calponin"/>
    <property type="match status" value="1"/>
</dbReference>
<dbReference type="Pfam" id="PF00307">
    <property type="entry name" value="CH"/>
    <property type="match status" value="1"/>
</dbReference>
<dbReference type="PRINTS" id="PR00888">
    <property type="entry name" value="SM22CALPONIN"/>
</dbReference>
<dbReference type="PRINTS" id="PR00890">
    <property type="entry name" value="TRANSGELIN"/>
</dbReference>
<dbReference type="SMART" id="SM00033">
    <property type="entry name" value="CH"/>
    <property type="match status" value="1"/>
</dbReference>
<dbReference type="SUPFAM" id="SSF47576">
    <property type="entry name" value="Calponin-homology domain, CH-domain"/>
    <property type="match status" value="1"/>
</dbReference>
<dbReference type="PROSITE" id="PS01052">
    <property type="entry name" value="CALPONIN_1"/>
    <property type="match status" value="1"/>
</dbReference>
<dbReference type="PROSITE" id="PS51122">
    <property type="entry name" value="CALPONIN_2"/>
    <property type="match status" value="1"/>
</dbReference>
<dbReference type="PROSITE" id="PS50021">
    <property type="entry name" value="CH"/>
    <property type="match status" value="1"/>
</dbReference>
<feature type="chain" id="PRO_0000272685" description="Transgelin-3">
    <location>
        <begin position="1"/>
        <end position="199"/>
    </location>
</feature>
<feature type="domain" description="Calponin-homology (CH)" evidence="2">
    <location>
        <begin position="24"/>
        <end position="136"/>
    </location>
</feature>
<feature type="repeat" description="Calponin-like">
    <location>
        <begin position="174"/>
        <end position="199"/>
    </location>
</feature>
<feature type="region of interest" description="Disordered" evidence="3">
    <location>
        <begin position="176"/>
        <end position="199"/>
    </location>
</feature>
<feature type="compositionally biased region" description="Polar residues" evidence="3">
    <location>
        <begin position="176"/>
        <end position="188"/>
    </location>
</feature>
<feature type="modified residue" description="Phosphoserine" evidence="1">
    <location>
        <position position="163"/>
    </location>
</feature>
<keyword id="KW-0597">Phosphoprotein</keyword>
<keyword id="KW-1185">Reference proteome</keyword>
<organism>
    <name type="scientific">Macaca fascicularis</name>
    <name type="common">Crab-eating macaque</name>
    <name type="synonym">Cynomolgus monkey</name>
    <dbReference type="NCBI Taxonomy" id="9541"/>
    <lineage>
        <taxon>Eukaryota</taxon>
        <taxon>Metazoa</taxon>
        <taxon>Chordata</taxon>
        <taxon>Craniata</taxon>
        <taxon>Vertebrata</taxon>
        <taxon>Euteleostomi</taxon>
        <taxon>Mammalia</taxon>
        <taxon>Eutheria</taxon>
        <taxon>Euarchontoglires</taxon>
        <taxon>Primates</taxon>
        <taxon>Haplorrhini</taxon>
        <taxon>Catarrhini</taxon>
        <taxon>Cercopithecidae</taxon>
        <taxon>Cercopithecinae</taxon>
        <taxon>Macaca</taxon>
    </lineage>
</organism>
<sequence length="199" mass="22473">MANRGPSYGLSREVQEKIEQKYDADLENKLVDWIILQCAEDIEHPPPGRAHFQKWLMDGTVLCKLINSLYPPGQEPIPKISESKMAFKQMEQISQFLKAAETYGVRTTDIFQTVDLWEGKDMAAVQRTLMALGSVAVTKDDGCYRGEPSWFHRKAQQNRRGFSEEQLRQGQNVIGLQMGSNKGASQAGMTGYGMPRQIM</sequence>
<protein>
    <recommendedName>
        <fullName>Transgelin-3</fullName>
    </recommendedName>
</protein>
<accession>Q4R5J4</accession>
<proteinExistence type="evidence at transcript level"/>
<comment type="similarity">
    <text evidence="4">Belongs to the calponin family.</text>
</comment>
<name>TAGL3_MACFA</name>